<comment type="function">
    <text evidence="1">Xylitol dehydrogenase which catalyzes the conversion of xylitol to D-xylulose. Xylose is a major component of hemicelluloses such as xylan. Most fungi utilize D-xylose via three enzymatic reactions, xylose reductase (XR), xylitol dehydrogenase (XDH), and xylulokinase, to form xylulose 5-phosphate, which enters pentose phosphate pathway (By similarity).</text>
</comment>
<comment type="catalytic activity">
    <reaction>
        <text>xylitol + NAD(+) = D-xylulose + NADH + H(+)</text>
        <dbReference type="Rhea" id="RHEA:20433"/>
        <dbReference type="ChEBI" id="CHEBI:15378"/>
        <dbReference type="ChEBI" id="CHEBI:17140"/>
        <dbReference type="ChEBI" id="CHEBI:17151"/>
        <dbReference type="ChEBI" id="CHEBI:57540"/>
        <dbReference type="ChEBI" id="CHEBI:57945"/>
        <dbReference type="EC" id="1.1.1.9"/>
    </reaction>
</comment>
<comment type="cofactor">
    <cofactor evidence="1">
        <name>Zn(2+)</name>
        <dbReference type="ChEBI" id="CHEBI:29105"/>
    </cofactor>
    <text evidence="1">Binds 1 zinc ion per subunit.</text>
</comment>
<comment type="pathway">
    <text>Carbohydrate degradation; L-arabinose degradation via L-arabinitol; D-xylulose 5-phosphate from L-arabinose (fungal route): step 4/5.</text>
</comment>
<comment type="similarity">
    <text evidence="3">Belongs to the zinc-containing alcohol dehydrogenase family.</text>
</comment>
<name>XYL2_ASPTN</name>
<accession>Q0CWQ2</accession>
<gene>
    <name type="primary">xdhA</name>
    <name type="ORF">ATEG_01882</name>
</gene>
<reference key="1">
    <citation type="submission" date="2005-09" db="EMBL/GenBank/DDBJ databases">
        <title>Annotation of the Aspergillus terreus NIH2624 genome.</title>
        <authorList>
            <person name="Birren B.W."/>
            <person name="Lander E.S."/>
            <person name="Galagan J.E."/>
            <person name="Nusbaum C."/>
            <person name="Devon K."/>
            <person name="Henn M."/>
            <person name="Ma L.-J."/>
            <person name="Jaffe D.B."/>
            <person name="Butler J."/>
            <person name="Alvarez P."/>
            <person name="Gnerre S."/>
            <person name="Grabherr M."/>
            <person name="Kleber M."/>
            <person name="Mauceli E.W."/>
            <person name="Brockman W."/>
            <person name="Rounsley S."/>
            <person name="Young S.K."/>
            <person name="LaButti K."/>
            <person name="Pushparaj V."/>
            <person name="DeCaprio D."/>
            <person name="Crawford M."/>
            <person name="Koehrsen M."/>
            <person name="Engels R."/>
            <person name="Montgomery P."/>
            <person name="Pearson M."/>
            <person name="Howarth C."/>
            <person name="Larson L."/>
            <person name="Luoma S."/>
            <person name="White J."/>
            <person name="Alvarado L."/>
            <person name="Kodira C.D."/>
            <person name="Zeng Q."/>
            <person name="Oleary S."/>
            <person name="Yandava C."/>
            <person name="Denning D.W."/>
            <person name="Nierman W.C."/>
            <person name="Milne T."/>
            <person name="Madden K."/>
        </authorList>
    </citation>
    <scope>NUCLEOTIDE SEQUENCE [LARGE SCALE GENOMIC DNA]</scope>
    <source>
        <strain>NIH 2624 / FGSC A1156</strain>
    </source>
</reference>
<protein>
    <recommendedName>
        <fullName>Probable D-xylulose reductase A</fullName>
        <ecNumber>1.1.1.9</ecNumber>
    </recommendedName>
    <alternativeName>
        <fullName>Xylitol dehydrogenase A</fullName>
    </alternativeName>
</protein>
<dbReference type="EC" id="1.1.1.9"/>
<dbReference type="EMBL" id="CH476595">
    <property type="protein sequence ID" value="EAU38639.1"/>
    <property type="molecule type" value="Genomic_DNA"/>
</dbReference>
<dbReference type="RefSeq" id="XP_001209247.1">
    <property type="nucleotide sequence ID" value="XM_001209247.1"/>
</dbReference>
<dbReference type="SMR" id="Q0CWQ2"/>
<dbReference type="STRING" id="341663.Q0CWQ2"/>
<dbReference type="EnsemblFungi" id="EAU38639">
    <property type="protein sequence ID" value="EAU38639"/>
    <property type="gene ID" value="ATEG_01882"/>
</dbReference>
<dbReference type="GeneID" id="4315996"/>
<dbReference type="VEuPathDB" id="FungiDB:ATEG_01882"/>
<dbReference type="eggNOG" id="KOG0024">
    <property type="taxonomic scope" value="Eukaryota"/>
</dbReference>
<dbReference type="HOGENOM" id="CLU_026673_11_5_1"/>
<dbReference type="OMA" id="FETWYAM"/>
<dbReference type="OrthoDB" id="3941538at2759"/>
<dbReference type="UniPathway" id="UPA00146">
    <property type="reaction ID" value="UER00577"/>
</dbReference>
<dbReference type="Proteomes" id="UP000007963">
    <property type="component" value="Unassembled WGS sequence"/>
</dbReference>
<dbReference type="GO" id="GO:0046526">
    <property type="term" value="F:D-xylulose reductase activity"/>
    <property type="evidence" value="ECO:0007669"/>
    <property type="project" value="UniProtKB-EC"/>
</dbReference>
<dbReference type="GO" id="GO:0003939">
    <property type="term" value="F:L-iditol 2-dehydrogenase (NAD+) activity"/>
    <property type="evidence" value="ECO:0007669"/>
    <property type="project" value="TreeGrafter"/>
</dbReference>
<dbReference type="GO" id="GO:0008270">
    <property type="term" value="F:zinc ion binding"/>
    <property type="evidence" value="ECO:0007669"/>
    <property type="project" value="InterPro"/>
</dbReference>
<dbReference type="GO" id="GO:0042732">
    <property type="term" value="P:D-xylose metabolic process"/>
    <property type="evidence" value="ECO:0007669"/>
    <property type="project" value="UniProtKB-KW"/>
</dbReference>
<dbReference type="GO" id="GO:0019569">
    <property type="term" value="P:L-arabinose catabolic process to xylulose 5-phosphate"/>
    <property type="evidence" value="ECO:0007669"/>
    <property type="project" value="UniProtKB-UniPathway"/>
</dbReference>
<dbReference type="GO" id="GO:0006062">
    <property type="term" value="P:sorbitol catabolic process"/>
    <property type="evidence" value="ECO:0007669"/>
    <property type="project" value="TreeGrafter"/>
</dbReference>
<dbReference type="CDD" id="cd05285">
    <property type="entry name" value="sorbitol_DH"/>
    <property type="match status" value="1"/>
</dbReference>
<dbReference type="FunFam" id="3.40.50.720:FF:000068">
    <property type="entry name" value="Sorbitol dehydrogenase"/>
    <property type="match status" value="1"/>
</dbReference>
<dbReference type="Gene3D" id="3.90.180.10">
    <property type="entry name" value="Medium-chain alcohol dehydrogenases, catalytic domain"/>
    <property type="match status" value="1"/>
</dbReference>
<dbReference type="Gene3D" id="3.40.50.720">
    <property type="entry name" value="NAD(P)-binding Rossmann-like Domain"/>
    <property type="match status" value="1"/>
</dbReference>
<dbReference type="InterPro" id="IPR013149">
    <property type="entry name" value="ADH-like_C"/>
</dbReference>
<dbReference type="InterPro" id="IPR013154">
    <property type="entry name" value="ADH-like_N"/>
</dbReference>
<dbReference type="InterPro" id="IPR002328">
    <property type="entry name" value="ADH_Zn_CS"/>
</dbReference>
<dbReference type="InterPro" id="IPR011032">
    <property type="entry name" value="GroES-like_sf"/>
</dbReference>
<dbReference type="InterPro" id="IPR036291">
    <property type="entry name" value="NAD(P)-bd_dom_sf"/>
</dbReference>
<dbReference type="InterPro" id="IPR020843">
    <property type="entry name" value="PKS_ER"/>
</dbReference>
<dbReference type="InterPro" id="IPR045306">
    <property type="entry name" value="SDH-like"/>
</dbReference>
<dbReference type="PANTHER" id="PTHR43161">
    <property type="entry name" value="SORBITOL DEHYDROGENASE"/>
    <property type="match status" value="1"/>
</dbReference>
<dbReference type="PANTHER" id="PTHR43161:SF9">
    <property type="entry name" value="SORBITOL DEHYDROGENASE"/>
    <property type="match status" value="1"/>
</dbReference>
<dbReference type="Pfam" id="PF08240">
    <property type="entry name" value="ADH_N"/>
    <property type="match status" value="1"/>
</dbReference>
<dbReference type="Pfam" id="PF00107">
    <property type="entry name" value="ADH_zinc_N"/>
    <property type="match status" value="1"/>
</dbReference>
<dbReference type="SMART" id="SM00829">
    <property type="entry name" value="PKS_ER"/>
    <property type="match status" value="1"/>
</dbReference>
<dbReference type="SUPFAM" id="SSF50129">
    <property type="entry name" value="GroES-like"/>
    <property type="match status" value="1"/>
</dbReference>
<dbReference type="SUPFAM" id="SSF51735">
    <property type="entry name" value="NAD(P)-binding Rossmann-fold domains"/>
    <property type="match status" value="1"/>
</dbReference>
<dbReference type="PROSITE" id="PS00059">
    <property type="entry name" value="ADH_ZINC"/>
    <property type="match status" value="1"/>
</dbReference>
<feature type="chain" id="PRO_0000393512" description="Probable D-xylulose reductase A">
    <location>
        <begin position="1"/>
        <end position="353"/>
    </location>
</feature>
<feature type="binding site" evidence="1">
    <location>
        <position position="42"/>
    </location>
    <ligand>
        <name>Zn(2+)</name>
        <dbReference type="ChEBI" id="CHEBI:29105"/>
        <note>catalytic</note>
    </ligand>
</feature>
<feature type="binding site" evidence="1">
    <location>
        <position position="67"/>
    </location>
    <ligand>
        <name>Zn(2+)</name>
        <dbReference type="ChEBI" id="CHEBI:29105"/>
        <note>catalytic</note>
    </ligand>
</feature>
<feature type="binding site" evidence="1">
    <location>
        <position position="68"/>
    </location>
    <ligand>
        <name>Zn(2+)</name>
        <dbReference type="ChEBI" id="CHEBI:29105"/>
        <note>catalytic</note>
    </ligand>
</feature>
<feature type="binding site" evidence="2">
    <location>
        <begin position="177"/>
        <end position="182"/>
    </location>
    <ligand>
        <name>NAD(+)</name>
        <dbReference type="ChEBI" id="CHEBI:57540"/>
    </ligand>
</feature>
<organism>
    <name type="scientific">Aspergillus terreus (strain NIH 2624 / FGSC A1156)</name>
    <dbReference type="NCBI Taxonomy" id="341663"/>
    <lineage>
        <taxon>Eukaryota</taxon>
        <taxon>Fungi</taxon>
        <taxon>Dikarya</taxon>
        <taxon>Ascomycota</taxon>
        <taxon>Pezizomycotina</taxon>
        <taxon>Eurotiomycetes</taxon>
        <taxon>Eurotiomycetidae</taxon>
        <taxon>Eurotiales</taxon>
        <taxon>Aspergillaceae</taxon>
        <taxon>Aspergillus</taxon>
        <taxon>Aspergillus subgen. Circumdati</taxon>
    </lineage>
</organism>
<evidence type="ECO:0000250" key="1"/>
<evidence type="ECO:0000255" key="2"/>
<evidence type="ECO:0000305" key="3"/>
<sequence length="353" mass="37571">MSAQNLSFVLQGIHQVKFEDRPIPELKDPHGVIVNVRFTGICGSDVHYWEHGSIGQFVVKDPMVLGHESSGVITKVGSAVTTLKVGDRVAMEPGIPCRRCEPCKAGKYNLCYEMAFAATPPYDGTLAKYYALPEDFCYKLPEQITLQEGALMEPLGVAVHIVRQAAVTPGQSVVVFGAGPVGLLCCAVARAFGASKIVAVDIQKPRLEFAKNYAATAIFEPAKVAAQENAARLIAENDLGPGADVAIDASGAEPSVHTGIHVLRTGGTYVQGGMGRSEMNFPIMAACTKELNVKGSFRYGSGDYKLAVELVASGRVNVKELITGVVKFEEAEQAFKEVKAGKGIKTLISGIEA</sequence>
<keyword id="KW-0119">Carbohydrate metabolism</keyword>
<keyword id="KW-0479">Metal-binding</keyword>
<keyword id="KW-0520">NAD</keyword>
<keyword id="KW-0560">Oxidoreductase</keyword>
<keyword id="KW-1185">Reference proteome</keyword>
<keyword id="KW-0859">Xylose metabolism</keyword>
<keyword id="KW-0862">Zinc</keyword>
<proteinExistence type="inferred from homology"/>